<sequence length="184" mass="19481">MTTPQIDERAMEAGAAALQETIVDPGPLDVTALAVAAALAAGLHSAADDPAAALDKCIVLDELTEFAEKLVVHDRPGGIGTTVEYVEVYEDASGVRLGTATGNAVVLKMEPHMWQFHQSVSELADGSFEAVGVIDCTAMLRRMTQVLRVTGRSGRYAGKSGFMTLAISDPNQRPPHYSVQVVLC</sequence>
<organism>
    <name type="scientific">Streptomyces rugosporus</name>
    <dbReference type="NCBI Taxonomy" id="295838"/>
    <lineage>
        <taxon>Bacteria</taxon>
        <taxon>Bacillati</taxon>
        <taxon>Actinomycetota</taxon>
        <taxon>Actinomycetes</taxon>
        <taxon>Kitasatosporales</taxon>
        <taxon>Streptomycetaceae</taxon>
        <taxon>Streptomyces</taxon>
    </lineage>
</organism>
<keyword id="KW-0002">3D-structure</keyword>
<keyword id="KW-0045">Antibiotic biosynthesis</keyword>
<keyword id="KW-1015">Disulfide bond</keyword>
<keyword id="KW-0413">Isomerase</keyword>
<gene>
    <name evidence="6" type="primary">pyrI4</name>
</gene>
<name>PYRI4_STRRG</name>
<dbReference type="EC" id="5.-.-.-" evidence="1"/>
<dbReference type="EMBL" id="JX042309">
    <property type="protein sequence ID" value="AFV71338.1"/>
    <property type="status" value="ALT_INIT"/>
    <property type="molecule type" value="Genomic_DNA"/>
</dbReference>
<dbReference type="PDB" id="5BTU">
    <property type="method" value="X-ray"/>
    <property type="resolution" value="2.50 A"/>
    <property type="chains" value="A/B=1-184"/>
</dbReference>
<dbReference type="PDB" id="5BU3">
    <property type="method" value="X-ray"/>
    <property type="resolution" value="1.90 A"/>
    <property type="chains" value="A/B/C/D=1-184"/>
</dbReference>
<dbReference type="PDB" id="7DVK">
    <property type="method" value="X-ray"/>
    <property type="resolution" value="2.60 A"/>
    <property type="chains" value="A/B/C/D=11-184"/>
</dbReference>
<dbReference type="PDBsum" id="5BTU"/>
<dbReference type="PDBsum" id="5BU3"/>
<dbReference type="PDBsum" id="7DVK"/>
<dbReference type="SMR" id="K7QVW7"/>
<dbReference type="EvolutionaryTrace" id="K7QVW7"/>
<dbReference type="GO" id="GO:0016853">
    <property type="term" value="F:isomerase activity"/>
    <property type="evidence" value="ECO:0007669"/>
    <property type="project" value="UniProtKB-KW"/>
</dbReference>
<dbReference type="GO" id="GO:0017000">
    <property type="term" value="P:antibiotic biosynthetic process"/>
    <property type="evidence" value="ECO:0007669"/>
    <property type="project" value="UniProtKB-KW"/>
</dbReference>
<dbReference type="InterPro" id="IPR041013">
    <property type="entry name" value="AOC-like"/>
</dbReference>
<dbReference type="Pfam" id="PF18678">
    <property type="entry name" value="AOC_like"/>
    <property type="match status" value="1"/>
</dbReference>
<proteinExistence type="evidence at protein level"/>
<evidence type="ECO:0000269" key="1">
    <source>
    </source>
</evidence>
<evidence type="ECO:0000269" key="2">
    <source>
    </source>
</evidence>
<evidence type="ECO:0000303" key="3">
    <source>
    </source>
</evidence>
<evidence type="ECO:0000303" key="4">
    <source>
    </source>
</evidence>
<evidence type="ECO:0000305" key="5">
    <source>
    </source>
</evidence>
<evidence type="ECO:0000312" key="6">
    <source>
        <dbReference type="EMBL" id="AFV71338.1"/>
    </source>
</evidence>
<evidence type="ECO:0007744" key="7">
    <source>
        <dbReference type="PDB" id="5BTU"/>
    </source>
</evidence>
<evidence type="ECO:0007744" key="8">
    <source>
        <dbReference type="PDB" id="5BU3"/>
    </source>
</evidence>
<evidence type="ECO:0007829" key="9">
    <source>
        <dbReference type="PDB" id="5BTU"/>
    </source>
</evidence>
<evidence type="ECO:0007829" key="10">
    <source>
        <dbReference type="PDB" id="5BU3"/>
    </source>
</evidence>
<feature type="chain" id="PRO_0000450857" description="Spiro-conjugate synthase">
    <location>
        <begin position="1"/>
        <end position="184"/>
    </location>
</feature>
<feature type="binding site" evidence="2">
    <location>
        <position position="115"/>
    </location>
    <ligand>
        <name>(1S,3R,6R,8R,9R,11R,14S,15S,19R,20R)-8-ethyl-9,15-dihydroxy-3,4,6,20-tetramethyl-21,23-dioxo-24-azapentacyclo[20.2.1.0(1,6).0(11,20).0(14,19)]pentacosa-4,12,22(25)-trien-25-olate</name>
        <dbReference type="ChEBI" id="CHEBI:155856"/>
    </ligand>
</feature>
<feature type="disulfide bond" evidence="7">
    <location>
        <begin position="57"/>
        <end position="184"/>
    </location>
</feature>
<feature type="mutagenesis site" description="Loss of catalytic activity." evidence="2">
    <original>R</original>
    <variation>A</variation>
    <location>
        <position position="9"/>
    </location>
</feature>
<feature type="mutagenesis site" description="Loss of catalytic activity." evidence="2">
    <original>E</original>
    <variation>R</variation>
    <location>
        <position position="20"/>
    </location>
</feature>
<feature type="mutagenesis site" description="Loss of catalytic activity." evidence="2">
    <original>D</original>
    <variation>R</variation>
    <location>
        <position position="74"/>
    </location>
</feature>
<feature type="mutagenesis site" description="Leads to a 60% loss of catalytic activity." evidence="2">
    <original>Q</original>
    <variation>A</variation>
    <location>
        <position position="115"/>
    </location>
</feature>
<feature type="helix" evidence="10">
    <location>
        <begin position="13"/>
        <end position="18"/>
    </location>
</feature>
<feature type="helix" evidence="10">
    <location>
        <begin position="30"/>
        <end position="40"/>
    </location>
</feature>
<feature type="helix" evidence="9">
    <location>
        <begin position="45"/>
        <end position="48"/>
    </location>
</feature>
<feature type="helix" evidence="10">
    <location>
        <begin position="50"/>
        <end position="56"/>
    </location>
</feature>
<feature type="strand" evidence="10">
    <location>
        <begin position="57"/>
        <end position="73"/>
    </location>
</feature>
<feature type="strand" evidence="10">
    <location>
        <begin position="82"/>
        <end position="90"/>
    </location>
</feature>
<feature type="strand" evidence="10">
    <location>
        <begin position="96"/>
        <end position="108"/>
    </location>
</feature>
<feature type="strand" evidence="10">
    <location>
        <begin position="110"/>
        <end position="112"/>
    </location>
</feature>
<feature type="strand" evidence="10">
    <location>
        <begin position="114"/>
        <end position="123"/>
    </location>
</feature>
<feature type="strand" evidence="10">
    <location>
        <begin position="126"/>
        <end position="135"/>
    </location>
</feature>
<feature type="helix" evidence="10">
    <location>
        <begin position="136"/>
        <end position="140"/>
    </location>
</feature>
<feature type="strand" evidence="10">
    <location>
        <begin position="145"/>
        <end position="154"/>
    </location>
</feature>
<feature type="turn" evidence="10">
    <location>
        <begin position="155"/>
        <end position="158"/>
    </location>
</feature>
<feature type="strand" evidence="10">
    <location>
        <begin position="160"/>
        <end position="169"/>
    </location>
</feature>
<feature type="strand" evidence="10">
    <location>
        <begin position="172"/>
        <end position="174"/>
    </location>
</feature>
<feature type="strand" evidence="10">
    <location>
        <begin position="176"/>
        <end position="184"/>
    </location>
</feature>
<accession>K7QVW7</accession>
<comment type="function">
    <text evidence="1 2">Involved in the biosynthesis of the spirotetramate antibiotics pyrroindomycins. Catalyzes the intramolecular cyclization forming the spiro-conjugate moiety in pyrroindomycins, via an exo-selective [4+2] cycloaddition reaction.</text>
</comment>
<comment type="catalytic activity">
    <reaction evidence="1">
        <text>4-[(1R,2R,4aS,5S,8aR)-2-[(2R,3R,5E,7E)-3-ethyl-2-hydroxy-5,7-dimethylnona-5,7-dien-1-yl]-5-hydroxy-1-methyl-1,2,4a,5,6,7,8,8a-octahydronaphthalene-1-carbonyl]-2-methylidene-5-oxo-2,5-dihydro-1H-pyrrol-3-olate = (1S,3R,6R,8R,9R,11R,14S,15S,19R,20R)-8-ethyl-9,15-dihydroxy-3,4,6,20-tetramethyl-21,23-dioxo-24-azapentacyclo[20.2.1.0(1,6).0(11,20).0(14,19)]pentacosa-4,12,22(25)-trien-25-olate</text>
        <dbReference type="Rhea" id="RHEA:64480"/>
        <dbReference type="ChEBI" id="CHEBI:155855"/>
        <dbReference type="ChEBI" id="CHEBI:155856"/>
    </reaction>
    <physiologicalReaction direction="left-to-right" evidence="1">
        <dbReference type="Rhea" id="RHEA:64481"/>
    </physiologicalReaction>
</comment>
<comment type="biophysicochemical properties">
    <kinetics>
        <KM evidence="1">224 uM for 4-[(1R,2R,4aS,5S,8aR)-2-[(2R,3R,5E,7E)-3-ethyl-2-hydroxy-5,7-dimethylnona-5,7-dien-1-yl]-5-hydroxy-1-methyl-1,2,4a,5,6,7,8,8a-octahydronaphthalene-1-carbonyl]-2-methylidene-5-oxo-2,5-dihydro-1H-pyrrol-3-olate</KM>
        <text evidence="1">kcat is 342.6 min(-1).</text>
    </kinetics>
</comment>
<comment type="pathway">
    <text evidence="1">Antibiotic biosynthesis.</text>
</comment>
<comment type="subunit">
    <text evidence="2">Homodimer.</text>
</comment>
<comment type="domain">
    <text evidence="2">The N-terminal 10-AA residues are absolutely required for enzymatic activity.</text>
</comment>
<comment type="disruption phenotype">
    <text evidence="1">Cells lacking this gene lose the ability to produce pyrroindomycins.</text>
</comment>
<comment type="miscellaneous">
    <text evidence="2">Reaction occurs via a unique trapping mechanism whereby the lid-like action of the N-terminal tail imposes conformational constraints on the beta-barrel catalytic core, which enhances the proximity and polarization effects of reactive groups (1,3-diene and alkene) to drive cyclization in a regio- and stereo-specific manner.</text>
</comment>
<comment type="sequence caution" evidence="5">
    <conflict type="erroneous initiation">
        <sequence resource="EMBL-CDS" id="AFV71338"/>
    </conflict>
    <text>Truncated N-terminus.</text>
</comment>
<protein>
    <recommendedName>
        <fullName evidence="3 4">Spiro-conjugate synthase</fullName>
        <ecNumber evidence="1">5.-.-.-</ecNumber>
    </recommendedName>
    <alternativeName>
        <fullName evidence="3">[4+2] cyclase PyrI4</fullName>
    </alternativeName>
</protein>
<reference key="1">
    <citation type="journal article" date="2012" name="J. Am. Chem. Soc.">
        <title>Insights into pyrroindomycin biosynthesis reveal a uniform paradigm for tetramate/tetronate formation.</title>
        <authorList>
            <person name="Wu Q."/>
            <person name="Wu Z."/>
            <person name="Qu X."/>
            <person name="Liu W."/>
        </authorList>
    </citation>
    <scope>NUCLEOTIDE SEQUENCE [GENOMIC DNA]</scope>
    <source>
        <strain>NRRL 21084</strain>
    </source>
</reference>
<reference key="2">
    <citation type="journal article" date="2015" name="Nat. Chem. Biol.">
        <title>An enzymatic [4+2] cyclization cascade creates the pentacyclic core of pyrroindomycins.</title>
        <authorList>
            <person name="Tian Z."/>
            <person name="Sun P."/>
            <person name="Yan Y."/>
            <person name="Wu Z."/>
            <person name="Zheng Q."/>
            <person name="Zhou S."/>
            <person name="Zhang H."/>
            <person name="Yu F."/>
            <person name="Jia X."/>
            <person name="Chen D."/>
            <person name="Mandi A."/>
            <person name="Kurtan T."/>
            <person name="Liu W."/>
        </authorList>
    </citation>
    <scope>FUNCTION</scope>
    <scope>CATALYTIC ACTIVITY</scope>
    <scope>BIOPHYSICOCHEMICAL PROPERTIES</scope>
    <scope>DISRUPTION PHENOTYPE</scope>
    <scope>PATHWAY</scope>
    <scope>REEXAMINATION OF THE N-TERMINAL SEQUENCE</scope>
</reference>
<reference evidence="7 8" key="3">
    <citation type="journal article" date="2016" name="Cell Chem. Biol.">
        <title>Enzyme-Dependent [4+2] Cycloaddition Depends on Lid-like Interaction of the N-Terminal Sequence with the Catalytic Core in PyrI4.</title>
        <authorList>
            <person name="Zheng Q."/>
            <person name="Guo Y."/>
            <person name="Yang L."/>
            <person name="Zhao Z."/>
            <person name="Wu Z."/>
            <person name="Zhang H."/>
            <person name="Liu J."/>
            <person name="Cheng X."/>
            <person name="Wu J."/>
            <person name="Yang H."/>
            <person name="Jiang H."/>
            <person name="Pan L."/>
            <person name="Liu W."/>
        </authorList>
    </citation>
    <scope>X-RAY CRYSTALLOGRAPHY (1.90 ANGSTROMS) OF APOENZYME AND IN COMPLEX WITH ITS PRODUCT</scope>
    <scope>DISULFIDE BOND</scope>
    <scope>FUNCTION</scope>
    <scope>REACTION MECHANISM</scope>
    <scope>SUBUNIT</scope>
    <scope>DOMAIN</scope>
    <scope>MUTAGENESIS OF ARG-9; GLU-20; ASP-74 AND GLN-115</scope>
</reference>